<keyword id="KW-0067">ATP-binding</keyword>
<keyword id="KW-0436">Ligase</keyword>
<keyword id="KW-0547">Nucleotide-binding</keyword>
<keyword id="KW-0648">Protein biosynthesis</keyword>
<evidence type="ECO:0000255" key="1">
    <source>
        <dbReference type="HAMAP-Rule" id="MF_00121"/>
    </source>
</evidence>
<dbReference type="EC" id="6.3.5.-" evidence="1"/>
<dbReference type="EMBL" id="CP000553">
    <property type="protein sequence ID" value="ABM74626.1"/>
    <property type="molecule type" value="Genomic_DNA"/>
</dbReference>
<dbReference type="RefSeq" id="WP_011822864.1">
    <property type="nucleotide sequence ID" value="NC_008819.1"/>
</dbReference>
<dbReference type="SMR" id="A2BZG6"/>
<dbReference type="KEGG" id="pme:NATL1_00621"/>
<dbReference type="eggNOG" id="COG0064">
    <property type="taxonomic scope" value="Bacteria"/>
</dbReference>
<dbReference type="HOGENOM" id="CLU_019240_0_0_3"/>
<dbReference type="Proteomes" id="UP000002592">
    <property type="component" value="Chromosome"/>
</dbReference>
<dbReference type="GO" id="GO:0050566">
    <property type="term" value="F:asparaginyl-tRNA synthase (glutamine-hydrolyzing) activity"/>
    <property type="evidence" value="ECO:0007669"/>
    <property type="project" value="RHEA"/>
</dbReference>
<dbReference type="GO" id="GO:0005524">
    <property type="term" value="F:ATP binding"/>
    <property type="evidence" value="ECO:0007669"/>
    <property type="project" value="UniProtKB-KW"/>
</dbReference>
<dbReference type="GO" id="GO:0050567">
    <property type="term" value="F:glutaminyl-tRNA synthase (glutamine-hydrolyzing) activity"/>
    <property type="evidence" value="ECO:0007669"/>
    <property type="project" value="UniProtKB-UniRule"/>
</dbReference>
<dbReference type="GO" id="GO:0070681">
    <property type="term" value="P:glutaminyl-tRNAGln biosynthesis via transamidation"/>
    <property type="evidence" value="ECO:0007669"/>
    <property type="project" value="TreeGrafter"/>
</dbReference>
<dbReference type="GO" id="GO:0006412">
    <property type="term" value="P:translation"/>
    <property type="evidence" value="ECO:0007669"/>
    <property type="project" value="UniProtKB-UniRule"/>
</dbReference>
<dbReference type="FunFam" id="1.10.10.410:FF:000001">
    <property type="entry name" value="Aspartyl/glutamyl-tRNA(Asn/Gln) amidotransferase subunit B"/>
    <property type="match status" value="1"/>
</dbReference>
<dbReference type="FunFam" id="1.10.150.380:FF:000001">
    <property type="entry name" value="Aspartyl/glutamyl-tRNA(Asn/Gln) amidotransferase subunit B"/>
    <property type="match status" value="1"/>
</dbReference>
<dbReference type="Gene3D" id="1.10.10.410">
    <property type="match status" value="1"/>
</dbReference>
<dbReference type="Gene3D" id="1.10.150.380">
    <property type="entry name" value="GatB domain, N-terminal subdomain"/>
    <property type="match status" value="1"/>
</dbReference>
<dbReference type="HAMAP" id="MF_00121">
    <property type="entry name" value="GatB"/>
    <property type="match status" value="1"/>
</dbReference>
<dbReference type="InterPro" id="IPR017959">
    <property type="entry name" value="Asn/Gln-tRNA_amidoTrfase_suB/E"/>
</dbReference>
<dbReference type="InterPro" id="IPR006075">
    <property type="entry name" value="Asn/Gln-tRNA_Trfase_suB/E_cat"/>
</dbReference>
<dbReference type="InterPro" id="IPR018027">
    <property type="entry name" value="Asn/Gln_amidotransferase"/>
</dbReference>
<dbReference type="InterPro" id="IPR003789">
    <property type="entry name" value="Asn/Gln_tRNA_amidoTrase-B-like"/>
</dbReference>
<dbReference type="InterPro" id="IPR004413">
    <property type="entry name" value="GatB"/>
</dbReference>
<dbReference type="InterPro" id="IPR042114">
    <property type="entry name" value="GatB_C_1"/>
</dbReference>
<dbReference type="InterPro" id="IPR023168">
    <property type="entry name" value="GatB_Yqey_C_2"/>
</dbReference>
<dbReference type="InterPro" id="IPR017958">
    <property type="entry name" value="Gln-tRNA_amidoTrfase_suB_CS"/>
</dbReference>
<dbReference type="InterPro" id="IPR014746">
    <property type="entry name" value="Gln_synth/guanido_kin_cat_dom"/>
</dbReference>
<dbReference type="NCBIfam" id="TIGR00133">
    <property type="entry name" value="gatB"/>
    <property type="match status" value="1"/>
</dbReference>
<dbReference type="NCBIfam" id="NF004012">
    <property type="entry name" value="PRK05477.1-2"/>
    <property type="match status" value="1"/>
</dbReference>
<dbReference type="NCBIfam" id="NF004014">
    <property type="entry name" value="PRK05477.1-4"/>
    <property type="match status" value="1"/>
</dbReference>
<dbReference type="PANTHER" id="PTHR11659">
    <property type="entry name" value="GLUTAMYL-TRNA GLN AMIDOTRANSFERASE SUBUNIT B MITOCHONDRIAL AND PROKARYOTIC PET112-RELATED"/>
    <property type="match status" value="1"/>
</dbReference>
<dbReference type="PANTHER" id="PTHR11659:SF0">
    <property type="entry name" value="GLUTAMYL-TRNA(GLN) AMIDOTRANSFERASE SUBUNIT B, MITOCHONDRIAL"/>
    <property type="match status" value="1"/>
</dbReference>
<dbReference type="Pfam" id="PF02934">
    <property type="entry name" value="GatB_N"/>
    <property type="match status" value="1"/>
</dbReference>
<dbReference type="Pfam" id="PF02637">
    <property type="entry name" value="GatB_Yqey"/>
    <property type="match status" value="1"/>
</dbReference>
<dbReference type="SMART" id="SM00845">
    <property type="entry name" value="GatB_Yqey"/>
    <property type="match status" value="1"/>
</dbReference>
<dbReference type="SUPFAM" id="SSF89095">
    <property type="entry name" value="GatB/YqeY motif"/>
    <property type="match status" value="1"/>
</dbReference>
<dbReference type="SUPFAM" id="SSF55931">
    <property type="entry name" value="Glutamine synthetase/guanido kinase"/>
    <property type="match status" value="1"/>
</dbReference>
<dbReference type="PROSITE" id="PS01234">
    <property type="entry name" value="GATB"/>
    <property type="match status" value="1"/>
</dbReference>
<proteinExistence type="inferred from homology"/>
<reference key="1">
    <citation type="journal article" date="2007" name="PLoS Genet.">
        <title>Patterns and implications of gene gain and loss in the evolution of Prochlorococcus.</title>
        <authorList>
            <person name="Kettler G.C."/>
            <person name="Martiny A.C."/>
            <person name="Huang K."/>
            <person name="Zucker J."/>
            <person name="Coleman M.L."/>
            <person name="Rodrigue S."/>
            <person name="Chen F."/>
            <person name="Lapidus A."/>
            <person name="Ferriera S."/>
            <person name="Johnson J."/>
            <person name="Steglich C."/>
            <person name="Church G.M."/>
            <person name="Richardson P."/>
            <person name="Chisholm S.W."/>
        </authorList>
    </citation>
    <scope>NUCLEOTIDE SEQUENCE [LARGE SCALE GENOMIC DNA]</scope>
    <source>
        <strain>NATL1A</strain>
    </source>
</reference>
<accession>A2BZG6</accession>
<gene>
    <name evidence="1" type="primary">gatB</name>
    <name type="ordered locus">NATL1_00621</name>
</gene>
<feature type="chain" id="PRO_1000016016" description="Aspartyl/glutamyl-tRNA(Asn/Gln) amidotransferase subunit B">
    <location>
        <begin position="1"/>
        <end position="491"/>
    </location>
</feature>
<protein>
    <recommendedName>
        <fullName evidence="1">Aspartyl/glutamyl-tRNA(Asn/Gln) amidotransferase subunit B</fullName>
        <shortName evidence="1">Asp/Glu-ADT subunit B</shortName>
        <ecNumber evidence="1">6.3.5.-</ecNumber>
    </recommendedName>
</protein>
<organism>
    <name type="scientific">Prochlorococcus marinus (strain NATL1A)</name>
    <dbReference type="NCBI Taxonomy" id="167555"/>
    <lineage>
        <taxon>Bacteria</taxon>
        <taxon>Bacillati</taxon>
        <taxon>Cyanobacteriota</taxon>
        <taxon>Cyanophyceae</taxon>
        <taxon>Synechococcales</taxon>
        <taxon>Prochlorococcaceae</taxon>
        <taxon>Prochlorococcus</taxon>
    </lineage>
</organism>
<name>GATB_PROM1</name>
<sequence>MSESNVSWEVVIGLETHVQLGTKSKIFTSASTTFGDDPNTHIDPVVCGLPGTLPVLNKKVLEYAVKAAMALNLNIASHSKFDRKQYFYPDLPKNYQISQFDEPIAEDGWIEVEVAEKGKETYVKKIGIERLHMEEDAGKLVHAGSDQLSGSTHSLVDYNRAGVALAEIVSKPDLRTGREAAEYAAEVRRIMRYLGVSDGNMQEGSLRCDVNISVRPTINDPFGTKVEIKNMNSFSAIQKACEYEIKRQIKAYESGEEVKQETRLWDEGKQLTKSMRSKEGSSDYRYFPDPDLGPIEVSNELKEKWRSELPELPAAKRNRYSTELGLSIYDARVLTDESSMATYFEKVVNEGGAAKSSANWITGDLAAYINSNRLTFDQLHFQPSELAEMLKMIDTGEISGKIAKEILPELLSKGGSPKQLVQERGLGMIGDPKVIEEIIDQLILKHPNEVESFRSGKKKLLGFFVGQLMKETKGKADPKLANQILNKKLQG</sequence>
<comment type="function">
    <text evidence="1">Allows the formation of correctly charged Asn-tRNA(Asn) or Gln-tRNA(Gln) through the transamidation of misacylated Asp-tRNA(Asn) or Glu-tRNA(Gln) in organisms which lack either or both of asparaginyl-tRNA or glutaminyl-tRNA synthetases. The reaction takes place in the presence of glutamine and ATP through an activated phospho-Asp-tRNA(Asn) or phospho-Glu-tRNA(Gln).</text>
</comment>
<comment type="catalytic activity">
    <reaction evidence="1">
        <text>L-glutamyl-tRNA(Gln) + L-glutamine + ATP + H2O = L-glutaminyl-tRNA(Gln) + L-glutamate + ADP + phosphate + H(+)</text>
        <dbReference type="Rhea" id="RHEA:17521"/>
        <dbReference type="Rhea" id="RHEA-COMP:9681"/>
        <dbReference type="Rhea" id="RHEA-COMP:9684"/>
        <dbReference type="ChEBI" id="CHEBI:15377"/>
        <dbReference type="ChEBI" id="CHEBI:15378"/>
        <dbReference type="ChEBI" id="CHEBI:29985"/>
        <dbReference type="ChEBI" id="CHEBI:30616"/>
        <dbReference type="ChEBI" id="CHEBI:43474"/>
        <dbReference type="ChEBI" id="CHEBI:58359"/>
        <dbReference type="ChEBI" id="CHEBI:78520"/>
        <dbReference type="ChEBI" id="CHEBI:78521"/>
        <dbReference type="ChEBI" id="CHEBI:456216"/>
    </reaction>
</comment>
<comment type="catalytic activity">
    <reaction evidence="1">
        <text>L-aspartyl-tRNA(Asn) + L-glutamine + ATP + H2O = L-asparaginyl-tRNA(Asn) + L-glutamate + ADP + phosphate + 2 H(+)</text>
        <dbReference type="Rhea" id="RHEA:14513"/>
        <dbReference type="Rhea" id="RHEA-COMP:9674"/>
        <dbReference type="Rhea" id="RHEA-COMP:9677"/>
        <dbReference type="ChEBI" id="CHEBI:15377"/>
        <dbReference type="ChEBI" id="CHEBI:15378"/>
        <dbReference type="ChEBI" id="CHEBI:29985"/>
        <dbReference type="ChEBI" id="CHEBI:30616"/>
        <dbReference type="ChEBI" id="CHEBI:43474"/>
        <dbReference type="ChEBI" id="CHEBI:58359"/>
        <dbReference type="ChEBI" id="CHEBI:78515"/>
        <dbReference type="ChEBI" id="CHEBI:78516"/>
        <dbReference type="ChEBI" id="CHEBI:456216"/>
    </reaction>
</comment>
<comment type="subunit">
    <text evidence="1">Heterotrimer of A, B and C subunits.</text>
</comment>
<comment type="similarity">
    <text evidence="1">Belongs to the GatB/GatE family. GatB subfamily.</text>
</comment>